<organism>
    <name type="scientific">Saccharomyces cerevisiae (strain YJM789)</name>
    <name type="common">Baker's yeast</name>
    <dbReference type="NCBI Taxonomy" id="307796"/>
    <lineage>
        <taxon>Eukaryota</taxon>
        <taxon>Fungi</taxon>
        <taxon>Dikarya</taxon>
        <taxon>Ascomycota</taxon>
        <taxon>Saccharomycotina</taxon>
        <taxon>Saccharomycetes</taxon>
        <taxon>Saccharomycetales</taxon>
        <taxon>Saccharomycetaceae</taxon>
        <taxon>Saccharomyces</taxon>
    </lineage>
</organism>
<gene>
    <name type="primary">SHE3</name>
    <name type="ORF">SCY_0344</name>
</gene>
<protein>
    <recommendedName>
        <fullName>SWI5-dependent HO expression protein 3</fullName>
    </recommendedName>
</protein>
<accession>A6ZL74</accession>
<keyword id="KW-0175">Coiled coil</keyword>
<keyword id="KW-0256">Endoplasmic reticulum</keyword>
<keyword id="KW-0472">Membrane</keyword>
<keyword id="KW-0509">mRNA transport</keyword>
<keyword id="KW-0597">Phosphoprotein</keyword>
<keyword id="KW-0694">RNA-binding</keyword>
<keyword id="KW-0813">Transport</keyword>
<feature type="chain" id="PRO_0000408940" description="SWI5-dependent HO expression protein 3">
    <location>
        <begin position="1"/>
        <end position="425"/>
    </location>
</feature>
<feature type="region of interest" description="Disordered" evidence="4">
    <location>
        <begin position="24"/>
        <end position="45"/>
    </location>
</feature>
<feature type="region of interest" description="Disordered" evidence="4">
    <location>
        <begin position="322"/>
        <end position="425"/>
    </location>
</feature>
<feature type="coiled-coil region" evidence="3">
    <location>
        <begin position="68"/>
        <end position="197"/>
    </location>
</feature>
<feature type="compositionally biased region" description="Polar residues" evidence="4">
    <location>
        <begin position="35"/>
        <end position="45"/>
    </location>
</feature>
<feature type="compositionally biased region" description="Low complexity" evidence="4">
    <location>
        <begin position="326"/>
        <end position="338"/>
    </location>
</feature>
<feature type="compositionally biased region" description="Polar residues" evidence="4">
    <location>
        <begin position="345"/>
        <end position="358"/>
    </location>
</feature>
<feature type="compositionally biased region" description="Polar residues" evidence="4">
    <location>
        <begin position="382"/>
        <end position="397"/>
    </location>
</feature>
<feature type="modified residue" description="Phosphoserine" evidence="2">
    <location>
        <position position="343"/>
    </location>
</feature>
<feature type="modified residue" description="Phosphoserine" evidence="2">
    <location>
        <position position="394"/>
    </location>
</feature>
<sequence length="425" mass="47532">MSDQDNTQTSSSKLAPHHNIFMANLESSPTKDRNTSSQNASSSRVIESLHDQIDMLTKTNLQLTTQSQNLLSKLELAQSKESKLLENLNLLKNENENLNSIFERKNKKLKELEKDYSELSNRYNEQKEKMDQLSKLAKNSSAIEQSCSEKLQNMEVNYNSLLESQNLYRDHYSDEISKLNEKIGLLELELSNQNLNYGSDTSSNSDIELNLNKFNDCVKDLKSLETEKDSKLSKIITHSLDELNLQSWLNLYQTNENLISTFAEKMDLKDVLKRNDEKISNKGAVVQTLKKNVQTQVESNNADALSSNNAQDMLPIKMVKLRKTPNTNDSSSNGNSSNNKRRSFYTASPLLSSGSIPKSASPVLPGVKRTASVRKPSSSSSKTNVTHNNDPSTSPTISVPPGVTRTVSSTHKKKRNSMVVHGAQS</sequence>
<name>SHE3_YEAS7</name>
<evidence type="ECO:0000250" key="1"/>
<evidence type="ECO:0000250" key="2">
    <source>
        <dbReference type="UniProtKB" id="P38272"/>
    </source>
</evidence>
<evidence type="ECO:0000255" key="3"/>
<evidence type="ECO:0000256" key="4">
    <source>
        <dbReference type="SAM" id="MobiDB-lite"/>
    </source>
</evidence>
<evidence type="ECO:0000305" key="5"/>
<comment type="function">
    <text evidence="1">RNA-binding protein that binds specific mRNAs including the ASH1 mRNA, coding for a repressor of the HO endonuclease. Part of the mRNA localization machinery that restricts accumulation of certain proteins to the bud and in the daughter cell. Required for the delivery of cortical endoplasmic reticulum into the emerging bud (By similarity).</text>
</comment>
<comment type="subcellular location">
    <subcellularLocation>
        <location evidence="1">Endoplasmic reticulum membrane</location>
        <topology evidence="1">Peripheral membrane protein</topology>
    </subcellularLocation>
</comment>
<comment type="similarity">
    <text evidence="5">Belongs to the SHE3 family.</text>
</comment>
<proteinExistence type="inferred from homology"/>
<dbReference type="EMBL" id="AAFW02000011">
    <property type="protein sequence ID" value="EDN64743.1"/>
    <property type="molecule type" value="Genomic_DNA"/>
</dbReference>
<dbReference type="SMR" id="A6ZL74"/>
<dbReference type="HOGENOM" id="CLU_038734_0_0_1"/>
<dbReference type="OrthoDB" id="39876at4893"/>
<dbReference type="Proteomes" id="UP000007060">
    <property type="component" value="Unassembled WGS sequence"/>
</dbReference>
<dbReference type="GO" id="GO:0005789">
    <property type="term" value="C:endoplasmic reticulum membrane"/>
    <property type="evidence" value="ECO:0007669"/>
    <property type="project" value="UniProtKB-SubCell"/>
</dbReference>
<dbReference type="GO" id="GO:0003723">
    <property type="term" value="F:RNA binding"/>
    <property type="evidence" value="ECO:0007669"/>
    <property type="project" value="UniProtKB-KW"/>
</dbReference>
<dbReference type="GO" id="GO:0048309">
    <property type="term" value="P:endoplasmic reticulum inheritance"/>
    <property type="evidence" value="ECO:0007669"/>
    <property type="project" value="InterPro"/>
</dbReference>
<dbReference type="GO" id="GO:0051028">
    <property type="term" value="P:mRNA transport"/>
    <property type="evidence" value="ECO:0007669"/>
    <property type="project" value="UniProtKB-KW"/>
</dbReference>
<dbReference type="InterPro" id="IPR031398">
    <property type="entry name" value="She3"/>
</dbReference>
<dbReference type="Pfam" id="PF17078">
    <property type="entry name" value="SHE3"/>
    <property type="match status" value="1"/>
</dbReference>
<reference key="1">
    <citation type="journal article" date="2007" name="Proc. Natl. Acad. Sci. U.S.A.">
        <title>Genome sequencing and comparative analysis of Saccharomyces cerevisiae strain YJM789.</title>
        <authorList>
            <person name="Wei W."/>
            <person name="McCusker J.H."/>
            <person name="Hyman R.W."/>
            <person name="Jones T."/>
            <person name="Ning Y."/>
            <person name="Cao Z."/>
            <person name="Gu Z."/>
            <person name="Bruno D."/>
            <person name="Miranda M."/>
            <person name="Nguyen M."/>
            <person name="Wilhelmy J."/>
            <person name="Komp C."/>
            <person name="Tamse R."/>
            <person name="Wang X."/>
            <person name="Jia P."/>
            <person name="Luedi P."/>
            <person name="Oefner P.J."/>
            <person name="David L."/>
            <person name="Dietrich F.S."/>
            <person name="Li Y."/>
            <person name="Davis R.W."/>
            <person name="Steinmetz L.M."/>
        </authorList>
    </citation>
    <scope>NUCLEOTIDE SEQUENCE [LARGE SCALE GENOMIC DNA]</scope>
    <source>
        <strain>YJM789</strain>
    </source>
</reference>